<organism>
    <name type="scientific">Dehalococcoides mccartyi (strain ATCC BAA-2100 / JCM 16839 / KCTC 5957 / BAV1)</name>
    <dbReference type="NCBI Taxonomy" id="216389"/>
    <lineage>
        <taxon>Bacteria</taxon>
        <taxon>Bacillati</taxon>
        <taxon>Chloroflexota</taxon>
        <taxon>Dehalococcoidia</taxon>
        <taxon>Dehalococcoidales</taxon>
        <taxon>Dehalococcoidaceae</taxon>
        <taxon>Dehalococcoides</taxon>
    </lineage>
</organism>
<feature type="chain" id="PRO_0000338813" description="Translation initiation factor IF-1">
    <location>
        <begin position="1"/>
        <end position="73"/>
    </location>
</feature>
<feature type="domain" description="S1-like" evidence="1">
    <location>
        <begin position="1"/>
        <end position="72"/>
    </location>
</feature>
<comment type="function">
    <text evidence="1">One of the essential components for the initiation of protein synthesis. Stabilizes the binding of IF-2 and IF-3 on the 30S subunit to which N-formylmethionyl-tRNA(fMet) subsequently binds. Helps modulate mRNA selection, yielding the 30S pre-initiation complex (PIC). Upon addition of the 50S ribosomal subunit IF-1, IF-2 and IF-3 are released leaving the mature 70S translation initiation complex.</text>
</comment>
<comment type="subunit">
    <text evidence="1">Component of the 30S ribosomal translation pre-initiation complex which assembles on the 30S ribosome in the order IF-2 and IF-3, IF-1 and N-formylmethionyl-tRNA(fMet); mRNA recruitment can occur at any time during PIC assembly.</text>
</comment>
<comment type="subcellular location">
    <subcellularLocation>
        <location evidence="1">Cytoplasm</location>
    </subcellularLocation>
</comment>
<comment type="similarity">
    <text evidence="1">Belongs to the IF-1 family.</text>
</comment>
<protein>
    <recommendedName>
        <fullName evidence="1">Translation initiation factor IF-1</fullName>
    </recommendedName>
</protein>
<proteinExistence type="inferred from homology"/>
<keyword id="KW-0963">Cytoplasm</keyword>
<keyword id="KW-0396">Initiation factor</keyword>
<keyword id="KW-0648">Protein biosynthesis</keyword>
<keyword id="KW-0694">RNA-binding</keyword>
<keyword id="KW-0699">rRNA-binding</keyword>
<evidence type="ECO:0000255" key="1">
    <source>
        <dbReference type="HAMAP-Rule" id="MF_00075"/>
    </source>
</evidence>
<name>IF1_DEHMB</name>
<accession>A5FRW7</accession>
<dbReference type="EMBL" id="CP000688">
    <property type="protein sequence ID" value="ABQ17059.1"/>
    <property type="molecule type" value="Genomic_DNA"/>
</dbReference>
<dbReference type="SMR" id="A5FRW7"/>
<dbReference type="KEGG" id="deb:DehaBAV1_0474"/>
<dbReference type="PATRIC" id="fig|216389.18.peg.517"/>
<dbReference type="HOGENOM" id="CLU_151267_1_0_0"/>
<dbReference type="GO" id="GO:0005829">
    <property type="term" value="C:cytosol"/>
    <property type="evidence" value="ECO:0007669"/>
    <property type="project" value="TreeGrafter"/>
</dbReference>
<dbReference type="GO" id="GO:0043022">
    <property type="term" value="F:ribosome binding"/>
    <property type="evidence" value="ECO:0007669"/>
    <property type="project" value="UniProtKB-UniRule"/>
</dbReference>
<dbReference type="GO" id="GO:0019843">
    <property type="term" value="F:rRNA binding"/>
    <property type="evidence" value="ECO:0007669"/>
    <property type="project" value="UniProtKB-UniRule"/>
</dbReference>
<dbReference type="GO" id="GO:0003743">
    <property type="term" value="F:translation initiation factor activity"/>
    <property type="evidence" value="ECO:0007669"/>
    <property type="project" value="UniProtKB-UniRule"/>
</dbReference>
<dbReference type="CDD" id="cd04451">
    <property type="entry name" value="S1_IF1"/>
    <property type="match status" value="1"/>
</dbReference>
<dbReference type="FunFam" id="2.40.50.140:FF:000002">
    <property type="entry name" value="Translation initiation factor IF-1"/>
    <property type="match status" value="1"/>
</dbReference>
<dbReference type="Gene3D" id="2.40.50.140">
    <property type="entry name" value="Nucleic acid-binding proteins"/>
    <property type="match status" value="1"/>
</dbReference>
<dbReference type="HAMAP" id="MF_00075">
    <property type="entry name" value="IF_1"/>
    <property type="match status" value="1"/>
</dbReference>
<dbReference type="InterPro" id="IPR012340">
    <property type="entry name" value="NA-bd_OB-fold"/>
</dbReference>
<dbReference type="InterPro" id="IPR006196">
    <property type="entry name" value="RNA-binding_domain_S1_IF1"/>
</dbReference>
<dbReference type="InterPro" id="IPR003029">
    <property type="entry name" value="S1_domain"/>
</dbReference>
<dbReference type="InterPro" id="IPR004368">
    <property type="entry name" value="TIF_IF1"/>
</dbReference>
<dbReference type="NCBIfam" id="TIGR00008">
    <property type="entry name" value="infA"/>
    <property type="match status" value="1"/>
</dbReference>
<dbReference type="PANTHER" id="PTHR33370">
    <property type="entry name" value="TRANSLATION INITIATION FACTOR IF-1, CHLOROPLASTIC"/>
    <property type="match status" value="1"/>
</dbReference>
<dbReference type="PANTHER" id="PTHR33370:SF1">
    <property type="entry name" value="TRANSLATION INITIATION FACTOR IF-1, CHLOROPLASTIC"/>
    <property type="match status" value="1"/>
</dbReference>
<dbReference type="Pfam" id="PF01176">
    <property type="entry name" value="eIF-1a"/>
    <property type="match status" value="1"/>
</dbReference>
<dbReference type="SMART" id="SM00316">
    <property type="entry name" value="S1"/>
    <property type="match status" value="1"/>
</dbReference>
<dbReference type="SUPFAM" id="SSF50249">
    <property type="entry name" value="Nucleic acid-binding proteins"/>
    <property type="match status" value="1"/>
</dbReference>
<dbReference type="PROSITE" id="PS50832">
    <property type="entry name" value="S1_IF1_TYPE"/>
    <property type="match status" value="1"/>
</dbReference>
<sequence>MPKKDAIEVEATVLEALPSAAFRVQLSNGHEVLAHISGKMRVHYIRILPGDRVLVELSPYDLTRGRVTYRFKS</sequence>
<gene>
    <name evidence="1" type="primary">infA</name>
    <name type="ordered locus">DehaBAV1_0474</name>
</gene>
<reference key="1">
    <citation type="submission" date="2007-05" db="EMBL/GenBank/DDBJ databases">
        <title>Complete sequence of Dehalococcoides sp. BAV1.</title>
        <authorList>
            <consortium name="US DOE Joint Genome Institute"/>
            <person name="Copeland A."/>
            <person name="Lucas S."/>
            <person name="Lapidus A."/>
            <person name="Barry K."/>
            <person name="Detter J.C."/>
            <person name="Glavina del Rio T."/>
            <person name="Hammon N."/>
            <person name="Israni S."/>
            <person name="Pitluck S."/>
            <person name="Lowry S."/>
            <person name="Clum A."/>
            <person name="Schmutz J."/>
            <person name="Larimer F."/>
            <person name="Land M."/>
            <person name="Hauser L."/>
            <person name="Kyrpides N."/>
            <person name="Kim E."/>
            <person name="Ritalahti K.M."/>
            <person name="Loeffler F."/>
            <person name="Richardson P."/>
        </authorList>
    </citation>
    <scope>NUCLEOTIDE SEQUENCE [LARGE SCALE GENOMIC DNA]</scope>
    <source>
        <strain>ATCC BAA-2100 / JCM 16839 / KCTC 5957 / BAV1</strain>
    </source>
</reference>